<accession>P16023</accession>
<evidence type="ECO:0000255" key="1">
    <source>
        <dbReference type="HAMAP-Rule" id="MF_01321"/>
    </source>
</evidence>
<evidence type="ECO:0000305" key="2"/>
<geneLocation type="chloroplast"/>
<dbReference type="EC" id="2.7.7.6" evidence="1"/>
<dbReference type="EMBL" id="X17318">
    <property type="protein sequence ID" value="CAA35195.1"/>
    <property type="molecule type" value="Genomic_DNA"/>
</dbReference>
<dbReference type="EMBL" id="X86563">
    <property type="protein sequence ID" value="CAA60276.1"/>
    <property type="molecule type" value="Genomic_DNA"/>
</dbReference>
<dbReference type="EMBL" id="M31206">
    <property type="protein sequence ID" value="AAA84490.1"/>
    <property type="molecule type" value="Genomic_DNA"/>
</dbReference>
<dbReference type="PIR" id="S12800">
    <property type="entry name" value="RNZMB"/>
</dbReference>
<dbReference type="RefSeq" id="NP_043015.1">
    <property type="nucleotide sequence ID" value="NC_001666.2"/>
</dbReference>
<dbReference type="SMR" id="P16023"/>
<dbReference type="FunCoup" id="P16023">
    <property type="interactions" value="272"/>
</dbReference>
<dbReference type="STRING" id="4577.P16023"/>
<dbReference type="PaxDb" id="4577-GRMZM5G877454_P01"/>
<dbReference type="GeneID" id="845225"/>
<dbReference type="KEGG" id="zma:845225"/>
<dbReference type="MaizeGDB" id="69580"/>
<dbReference type="eggNOG" id="KOG0214">
    <property type="taxonomic scope" value="Eukaryota"/>
</dbReference>
<dbReference type="HOGENOM" id="CLU_000524_4_3_1"/>
<dbReference type="InParanoid" id="P16023"/>
<dbReference type="OMA" id="FMTWEGY"/>
<dbReference type="OrthoDB" id="5869532at2759"/>
<dbReference type="Proteomes" id="UP000007305">
    <property type="component" value="Chloroplast"/>
</dbReference>
<dbReference type="ExpressionAtlas" id="P16023">
    <property type="expression patterns" value="baseline and differential"/>
</dbReference>
<dbReference type="GO" id="GO:0009507">
    <property type="term" value="C:chloroplast"/>
    <property type="evidence" value="ECO:0007669"/>
    <property type="project" value="UniProtKB-SubCell"/>
</dbReference>
<dbReference type="GO" id="GO:0000428">
    <property type="term" value="C:DNA-directed RNA polymerase complex"/>
    <property type="evidence" value="ECO:0007669"/>
    <property type="project" value="UniProtKB-KW"/>
</dbReference>
<dbReference type="GO" id="GO:0005739">
    <property type="term" value="C:mitochondrion"/>
    <property type="evidence" value="ECO:0007669"/>
    <property type="project" value="GOC"/>
</dbReference>
<dbReference type="GO" id="GO:0003677">
    <property type="term" value="F:DNA binding"/>
    <property type="evidence" value="ECO:0007669"/>
    <property type="project" value="UniProtKB-UniRule"/>
</dbReference>
<dbReference type="GO" id="GO:0003899">
    <property type="term" value="F:DNA-directed RNA polymerase activity"/>
    <property type="evidence" value="ECO:0007669"/>
    <property type="project" value="UniProtKB-UniRule"/>
</dbReference>
<dbReference type="GO" id="GO:0032549">
    <property type="term" value="F:ribonucleoside binding"/>
    <property type="evidence" value="ECO:0007669"/>
    <property type="project" value="InterPro"/>
</dbReference>
<dbReference type="GO" id="GO:0006351">
    <property type="term" value="P:DNA-templated transcription"/>
    <property type="evidence" value="ECO:0007669"/>
    <property type="project" value="UniProtKB-UniRule"/>
</dbReference>
<dbReference type="CDD" id="cd00653">
    <property type="entry name" value="RNA_pol_B_RPB2"/>
    <property type="match status" value="1"/>
</dbReference>
<dbReference type="Gene3D" id="2.40.50.100">
    <property type="match status" value="1"/>
</dbReference>
<dbReference type="Gene3D" id="2.40.50.150">
    <property type="match status" value="1"/>
</dbReference>
<dbReference type="Gene3D" id="3.90.1100.10">
    <property type="match status" value="1"/>
</dbReference>
<dbReference type="Gene3D" id="2.30.150.10">
    <property type="entry name" value="DNA-directed RNA polymerase, beta subunit, external 1 domain"/>
    <property type="match status" value="1"/>
</dbReference>
<dbReference type="Gene3D" id="2.40.270.10">
    <property type="entry name" value="DNA-directed RNA polymerase, subunit 2, domain 6"/>
    <property type="match status" value="1"/>
</dbReference>
<dbReference type="Gene3D" id="3.90.1800.10">
    <property type="entry name" value="RNA polymerase alpha subunit dimerisation domain"/>
    <property type="match status" value="1"/>
</dbReference>
<dbReference type="Gene3D" id="3.90.1110.10">
    <property type="entry name" value="RNA polymerase Rpb2, domain 2"/>
    <property type="match status" value="1"/>
</dbReference>
<dbReference type="HAMAP" id="MF_01321">
    <property type="entry name" value="RNApol_bact_RpoB"/>
    <property type="match status" value="1"/>
</dbReference>
<dbReference type="InterPro" id="IPR042107">
    <property type="entry name" value="DNA-dir_RNA_pol_bsu_ext_1_sf"/>
</dbReference>
<dbReference type="InterPro" id="IPR015712">
    <property type="entry name" value="DNA-dir_RNA_pol_su2"/>
</dbReference>
<dbReference type="InterPro" id="IPR007120">
    <property type="entry name" value="DNA-dir_RNAP_su2_dom"/>
</dbReference>
<dbReference type="InterPro" id="IPR037033">
    <property type="entry name" value="DNA-dir_RNAP_su2_hyb_sf"/>
</dbReference>
<dbReference type="InterPro" id="IPR010243">
    <property type="entry name" value="RNA_pol_bsu_bac"/>
</dbReference>
<dbReference type="InterPro" id="IPR007121">
    <property type="entry name" value="RNA_pol_bsu_CS"/>
</dbReference>
<dbReference type="InterPro" id="IPR007642">
    <property type="entry name" value="RNA_pol_Rpb2_2"/>
</dbReference>
<dbReference type="InterPro" id="IPR037034">
    <property type="entry name" value="RNA_pol_Rpb2_2_sf"/>
</dbReference>
<dbReference type="InterPro" id="IPR007645">
    <property type="entry name" value="RNA_pol_Rpb2_3"/>
</dbReference>
<dbReference type="InterPro" id="IPR007641">
    <property type="entry name" value="RNA_pol_Rpb2_7"/>
</dbReference>
<dbReference type="InterPro" id="IPR014724">
    <property type="entry name" value="RNA_pol_RPB2_OB-fold"/>
</dbReference>
<dbReference type="NCBIfam" id="NF001616">
    <property type="entry name" value="PRK00405.1"/>
    <property type="match status" value="1"/>
</dbReference>
<dbReference type="PANTHER" id="PTHR20856">
    <property type="entry name" value="DNA-DIRECTED RNA POLYMERASE I SUBUNIT 2"/>
    <property type="match status" value="1"/>
</dbReference>
<dbReference type="Pfam" id="PF04561">
    <property type="entry name" value="RNA_pol_Rpb2_2"/>
    <property type="match status" value="1"/>
</dbReference>
<dbReference type="Pfam" id="PF04565">
    <property type="entry name" value="RNA_pol_Rpb2_3"/>
    <property type="match status" value="1"/>
</dbReference>
<dbReference type="Pfam" id="PF00562">
    <property type="entry name" value="RNA_pol_Rpb2_6"/>
    <property type="match status" value="1"/>
</dbReference>
<dbReference type="Pfam" id="PF04560">
    <property type="entry name" value="RNA_pol_Rpb2_7"/>
    <property type="match status" value="1"/>
</dbReference>
<dbReference type="SUPFAM" id="SSF64484">
    <property type="entry name" value="beta and beta-prime subunits of DNA dependent RNA-polymerase"/>
    <property type="match status" value="1"/>
</dbReference>
<dbReference type="PROSITE" id="PS01166">
    <property type="entry name" value="RNA_POL_BETA"/>
    <property type="match status" value="1"/>
</dbReference>
<keyword id="KW-0150">Chloroplast</keyword>
<keyword id="KW-0240">DNA-directed RNA polymerase</keyword>
<keyword id="KW-0548">Nucleotidyltransferase</keyword>
<keyword id="KW-0934">Plastid</keyword>
<keyword id="KW-1185">Reference proteome</keyword>
<keyword id="KW-0804">Transcription</keyword>
<keyword id="KW-0808">Transferase</keyword>
<organism>
    <name type="scientific">Zea mays</name>
    <name type="common">Maize</name>
    <dbReference type="NCBI Taxonomy" id="4577"/>
    <lineage>
        <taxon>Eukaryota</taxon>
        <taxon>Viridiplantae</taxon>
        <taxon>Streptophyta</taxon>
        <taxon>Embryophyta</taxon>
        <taxon>Tracheophyta</taxon>
        <taxon>Spermatophyta</taxon>
        <taxon>Magnoliopsida</taxon>
        <taxon>Liliopsida</taxon>
        <taxon>Poales</taxon>
        <taxon>Poaceae</taxon>
        <taxon>PACMAD clade</taxon>
        <taxon>Panicoideae</taxon>
        <taxon>Andropogonodae</taxon>
        <taxon>Andropogoneae</taxon>
        <taxon>Tripsacinae</taxon>
        <taxon>Zea</taxon>
    </lineage>
</organism>
<sequence>MLRNGNEGMSTIPGFSQIQFEGFCRFINQGLAEELEKFPTIKDPDHEIAFQLFAKGYQLLEPSIKERNAVYESLTYSSELYVSARLIFGFDVQKETISIGNIPIMNSLGTFIINGIYRIVINQILLSPGIYYRSELDHKGISIYTGTIISDWGGRSELAIDKKERIWARVSRKQKISILVLSSAMGSNLREILDNVSYPEIFLSFPNAKEKKRIESKEKAILEFYQQFACVGGDLVFSESLCEELQKKFFQQKCELGRVGRRNMNRRLNLDIPQNNTFLLPRDVLAATDHLIGMKFGTGILDDDDMNHLKNKRIRSVADLLQDQFGLALGRLQHAVQKTIRRVFIRQSKPTPQTLVTPTSTSILLITTYETFFGTYPLAQVFDQTNPLTQTVHGRKVSCLGPGGLTGRTASFRSRDIHPSHYGRICPIDTSEGINVGLTGSLAIHARIDHWWGSIESPFYEISEKAKEKKERQVVYLSPNRDEYYMIAAGNSLSLNQGIQEEQVVPARYRQEFLTIAWEQIHVRSIFPFQYFSIGGSLIPFIEHNDANRALMSSNMQRQAVPLSRSEKCIVGTGLERQTALDSRVSVIAQREGKIISSDSHKILLSSSGKTISIPLVAHRRSNKNTCMHQKPRVPRGKSIKKGQILAEGAATVGGELALGKNVLVAYMPWEGYNFEDAVLISERLVYEDIYTSFHIRKYEIQTDTTSQGSAEKITKQIPHLEEHLLRNLDRNGVVRLGSWVETGDILVGKLTPQIASESSYIAEAGLLRAIFGLEVSTSKETSLKLPIGGRGRVIDVKWIQRDPFDIMVRVYILQKREIKVGDKVAGRHGNKGIISKILPRQDMPYLQDGAPVDMVFNPLGVPSRMNVGQIFESSLGLAGDLLKKHYRIAPFDERYEQEASRKLVFSELYEASKQTKNPWVFEPEYPGKSRIFDGRTGDPFEQPVLIGKSYILKLIHQVDEKIHGRSTGPYSLVTQQPVRGRAKQGGQRIGEMEVWALEGFGVAHILQEILTYKSDHLIARQEILNATIWGKRMPNHEDPPESFRVLVRELRSLALELNHFLVSEKNFQVNREDV</sequence>
<feature type="chain" id="PRO_0000048029" description="DNA-directed RNA polymerase subunit beta">
    <location>
        <begin position="1"/>
        <end position="1075"/>
    </location>
</feature>
<feature type="sequence conflict" description="In Ref. 4; AAA84490." evidence="2" ref="4">
    <original>S</original>
    <variation>M</variation>
    <location>
        <position position="16"/>
    </location>
</feature>
<comment type="function">
    <text>DNA-dependent RNA polymerase catalyzes the transcription of DNA into RNA using the four ribonucleoside triphosphates as substrates.</text>
</comment>
<comment type="catalytic activity">
    <reaction evidence="1">
        <text>RNA(n) + a ribonucleoside 5'-triphosphate = RNA(n+1) + diphosphate</text>
        <dbReference type="Rhea" id="RHEA:21248"/>
        <dbReference type="Rhea" id="RHEA-COMP:14527"/>
        <dbReference type="Rhea" id="RHEA-COMP:17342"/>
        <dbReference type="ChEBI" id="CHEBI:33019"/>
        <dbReference type="ChEBI" id="CHEBI:61557"/>
        <dbReference type="ChEBI" id="CHEBI:140395"/>
        <dbReference type="EC" id="2.7.7.6"/>
    </reaction>
</comment>
<comment type="subunit">
    <text evidence="1">In plastids the minimal PEP RNA polymerase catalytic core is composed of four subunits: alpha, beta, beta', and beta''. When a (nuclear-encoded) sigma factor is associated with the core the holoenzyme is formed, which can initiate transcription.</text>
</comment>
<comment type="subcellular location">
    <subcellularLocation>
        <location>Plastid</location>
        <location>Chloroplast</location>
    </subcellularLocation>
</comment>
<comment type="similarity">
    <text evidence="1">Belongs to the RNA polymerase beta chain family.</text>
</comment>
<gene>
    <name evidence="1" type="primary">rpoB</name>
</gene>
<protein>
    <recommendedName>
        <fullName evidence="1">DNA-directed RNA polymerase subunit beta</fullName>
        <ecNumber evidence="1">2.7.7.6</ecNumber>
    </recommendedName>
    <alternativeName>
        <fullName evidence="1">PEP</fullName>
    </alternativeName>
    <alternativeName>
        <fullName evidence="1">Plastid-encoded RNA polymerase subunit beta</fullName>
        <shortName evidence="1">RNA polymerase subunit beta</shortName>
    </alternativeName>
</protein>
<proteinExistence type="inferred from homology"/>
<reference key="1">
    <citation type="journal article" date="1990" name="Mol. Gen. Genet.">
        <title>Nucleotide sequence of the maize chloroplast rpo B/C1/C2 operon: comparison between the derived protein primary structures from various organisms with respect to functional domains.</title>
        <authorList>
            <person name="Igloi G.L."/>
            <person name="Meinke A."/>
            <person name="Doery I."/>
            <person name="Koessel H."/>
        </authorList>
    </citation>
    <scope>NUCLEOTIDE SEQUENCE [LARGE SCALE GENOMIC DNA]</scope>
    <source>
        <strain>cv. B73</strain>
    </source>
</reference>
<reference key="2">
    <citation type="journal article" date="1990" name="Nucleic Acids Res.">
        <title>Nucleotide and derived amino acid sequence of rps2 from maize chloroplasts.</title>
        <authorList>
            <person name="Igloi G.L."/>
            <person name="Meinke A."/>
            <person name="Doery I."/>
            <person name="Koessel H."/>
        </authorList>
    </citation>
    <scope>NUCLEOTIDE SEQUENCE [GENOMIC DNA]</scope>
</reference>
<reference key="3">
    <citation type="journal article" date="1995" name="J. Mol. Biol.">
        <title>Complete sequence of the maize chloroplast genome: gene content, hotspots of divergence and fine tuning of genetic information by transcript editing.</title>
        <authorList>
            <person name="Maier R.M."/>
            <person name="Neckermann K."/>
            <person name="Igloi G.L."/>
            <person name="Koessel H."/>
        </authorList>
    </citation>
    <scope>NUCLEOTIDE SEQUENCE [LARGE SCALE GENOMIC DNA]</scope>
    <source>
        <strain>cv. B73</strain>
    </source>
</reference>
<reference key="4">
    <citation type="journal article" date="1990" name="Proc. Natl. Acad. Sci. U.S.A.">
        <title>Maize chloroplast RNA polymerase: the 180-, 120-, and 38-kilodalton polypeptides are encoded in chloroplast genes.</title>
        <authorList>
            <person name="Hu J."/>
            <person name="Bogorad L."/>
        </authorList>
    </citation>
    <scope>NUCLEOTIDE SEQUENCE [GENOMIC DNA] OF 1-88</scope>
</reference>
<name>RPOB_MAIZE</name>